<name>CALX_HUMAN</name>
<gene>
    <name type="primary">CANX</name>
</gene>
<dbReference type="EMBL" id="L10284">
    <property type="protein sequence ID" value="AAA36125.1"/>
    <property type="molecule type" value="mRNA"/>
</dbReference>
<dbReference type="EMBL" id="L18887">
    <property type="protein sequence ID" value="AAA21013.1"/>
    <property type="molecule type" value="mRNA"/>
</dbReference>
<dbReference type="EMBL" id="M94859">
    <property type="protein sequence ID" value="AAA21749.1"/>
    <property type="molecule type" value="mRNA"/>
</dbReference>
<dbReference type="EMBL" id="M98452">
    <property type="protein sequence ID" value="AAA35696.1"/>
    <property type="molecule type" value="mRNA"/>
</dbReference>
<dbReference type="EMBL" id="AK294702">
    <property type="protein sequence ID" value="BAG57859.1"/>
    <property type="molecule type" value="mRNA"/>
</dbReference>
<dbReference type="EMBL" id="AK304420">
    <property type="protein sequence ID" value="BAG65250.1"/>
    <property type="molecule type" value="mRNA"/>
</dbReference>
<dbReference type="EMBL" id="AK312334">
    <property type="protein sequence ID" value="BAG35255.1"/>
    <property type="molecule type" value="mRNA"/>
</dbReference>
<dbReference type="EMBL" id="AC113426">
    <property type="status" value="NOT_ANNOTATED_CDS"/>
    <property type="molecule type" value="Genomic_DNA"/>
</dbReference>
<dbReference type="EMBL" id="AC136604">
    <property type="status" value="NOT_ANNOTATED_CDS"/>
    <property type="molecule type" value="Genomic_DNA"/>
</dbReference>
<dbReference type="EMBL" id="CH471165">
    <property type="protein sequence ID" value="EAW53802.1"/>
    <property type="molecule type" value="Genomic_DNA"/>
</dbReference>
<dbReference type="EMBL" id="CH471165">
    <property type="protein sequence ID" value="EAW53803.1"/>
    <property type="molecule type" value="Genomic_DNA"/>
</dbReference>
<dbReference type="EMBL" id="CH471165">
    <property type="protein sequence ID" value="EAW53805.1"/>
    <property type="molecule type" value="Genomic_DNA"/>
</dbReference>
<dbReference type="EMBL" id="BC003552">
    <property type="protein sequence ID" value="AAH03552.1"/>
    <property type="molecule type" value="mRNA"/>
</dbReference>
<dbReference type="EMBL" id="BC042843">
    <property type="protein sequence ID" value="AAH42843.1"/>
    <property type="molecule type" value="mRNA"/>
</dbReference>
<dbReference type="EMBL" id="AJ271880">
    <property type="protein sequence ID" value="CAB72137.1"/>
    <property type="molecule type" value="mRNA"/>
</dbReference>
<dbReference type="CCDS" id="CCDS4447.1">
    <molecule id="P27824-1"/>
</dbReference>
<dbReference type="CCDS" id="CCDS93840.1">
    <molecule id="P27824-3"/>
</dbReference>
<dbReference type="PIR" id="A46164">
    <property type="entry name" value="A46164"/>
</dbReference>
<dbReference type="PIR" id="A46673">
    <property type="entry name" value="A46673"/>
</dbReference>
<dbReference type="PIR" id="I53260">
    <property type="entry name" value="I53260"/>
</dbReference>
<dbReference type="RefSeq" id="NP_001019820.1">
    <molecule id="P27824-1"/>
    <property type="nucleotide sequence ID" value="NM_001024649.2"/>
</dbReference>
<dbReference type="RefSeq" id="NP_001350923.1">
    <molecule id="P27824-2"/>
    <property type="nucleotide sequence ID" value="NM_001363994.1"/>
</dbReference>
<dbReference type="RefSeq" id="NP_001350925.1">
    <molecule id="P27824-1"/>
    <property type="nucleotide sequence ID" value="NM_001363996.1"/>
</dbReference>
<dbReference type="RefSeq" id="NP_001350926.1">
    <molecule id="P27824-1"/>
    <property type="nucleotide sequence ID" value="NM_001363997.1"/>
</dbReference>
<dbReference type="RefSeq" id="NP_001350929.1">
    <molecule id="P27824-3"/>
    <property type="nucleotide sequence ID" value="NM_001364000.1"/>
</dbReference>
<dbReference type="RefSeq" id="NP_001350930.1">
    <molecule id="P27824-3"/>
    <property type="nucleotide sequence ID" value="NM_001364001.1"/>
</dbReference>
<dbReference type="RefSeq" id="NP_001737.1">
    <molecule id="P27824-1"/>
    <property type="nucleotide sequence ID" value="NM_001746.4"/>
</dbReference>
<dbReference type="RefSeq" id="XP_011532967.1">
    <molecule id="P27824-1"/>
    <property type="nucleotide sequence ID" value="XM_011534665.4"/>
</dbReference>
<dbReference type="RefSeq" id="XP_047273748.1">
    <molecule id="P27824-1"/>
    <property type="nucleotide sequence ID" value="XM_047417792.1"/>
</dbReference>
<dbReference type="RefSeq" id="XP_054187987.1">
    <molecule id="P27824-1"/>
    <property type="nucleotide sequence ID" value="XM_054332012.1"/>
</dbReference>
<dbReference type="RefSeq" id="XP_054187988.1">
    <molecule id="P27824-1"/>
    <property type="nucleotide sequence ID" value="XM_054332013.1"/>
</dbReference>
<dbReference type="RefSeq" id="XP_054209564.1">
    <molecule id="P27824-1"/>
    <property type="nucleotide sequence ID" value="XM_054353589.1"/>
</dbReference>
<dbReference type="SMR" id="P27824"/>
<dbReference type="BioGRID" id="107271">
    <property type="interactions" value="1334"/>
</dbReference>
<dbReference type="CORUM" id="P27824"/>
<dbReference type="DIP" id="DIP-457N"/>
<dbReference type="FunCoup" id="P27824">
    <property type="interactions" value="3512"/>
</dbReference>
<dbReference type="IntAct" id="P27824">
    <property type="interactions" value="964"/>
</dbReference>
<dbReference type="MINT" id="P27824"/>
<dbReference type="STRING" id="9606.ENSP00000247461"/>
<dbReference type="BindingDB" id="P27824"/>
<dbReference type="ChEMBL" id="CHEMBL2719"/>
<dbReference type="DrugBank" id="DB00025">
    <property type="generic name" value="Antihemophilic factor, human recombinant"/>
</dbReference>
<dbReference type="DrugBank" id="DB11093">
    <property type="generic name" value="Calcium citrate"/>
</dbReference>
<dbReference type="DrugBank" id="DB11348">
    <property type="generic name" value="Calcium Phosphate"/>
</dbReference>
<dbReference type="DrugBank" id="DB14481">
    <property type="generic name" value="Calcium phosphate dihydrate"/>
</dbReference>
<dbReference type="DrugBank" id="DB06245">
    <property type="generic name" value="Lanoteplase"/>
</dbReference>
<dbReference type="DrugBank" id="DB13998">
    <property type="generic name" value="Lonoctocog alfa"/>
</dbReference>
<dbReference type="DrugBank" id="DB13999">
    <property type="generic name" value="Moroctocog alfa"/>
</dbReference>
<dbReference type="TCDB" id="8.A.165.1.1">
    <property type="family name" value="the calnexin (calnexin) family"/>
</dbReference>
<dbReference type="GlyCosmos" id="P27824">
    <property type="glycosylation" value="3 sites, 2 glycans"/>
</dbReference>
<dbReference type="GlyGen" id="P27824">
    <property type="glycosylation" value="10 sites, 1 N-linked glycan (1 site), 4 O-linked glycans (8 sites)"/>
</dbReference>
<dbReference type="iPTMnet" id="P27824"/>
<dbReference type="PhosphoSitePlus" id="P27824"/>
<dbReference type="SwissPalm" id="P27824"/>
<dbReference type="BioMuta" id="CANX"/>
<dbReference type="DMDM" id="543920"/>
<dbReference type="jPOST" id="P27824"/>
<dbReference type="MassIVE" id="P27824"/>
<dbReference type="PaxDb" id="9606-ENSP00000247461"/>
<dbReference type="PeptideAtlas" id="P27824"/>
<dbReference type="PRIDE" id="P27824"/>
<dbReference type="ProteomicsDB" id="54425">
    <molecule id="P27824-1"/>
</dbReference>
<dbReference type="ProteomicsDB" id="5850"/>
<dbReference type="Pumba" id="P27824"/>
<dbReference type="TopDownProteomics" id="P27824-1">
    <molecule id="P27824-1"/>
</dbReference>
<dbReference type="ABCD" id="P27824">
    <property type="antibodies" value="1 sequenced antibody"/>
</dbReference>
<dbReference type="Antibodypedia" id="2421">
    <property type="antibodies" value="1179 antibodies from 45 providers"/>
</dbReference>
<dbReference type="DNASU" id="821"/>
<dbReference type="Ensembl" id="ENST00000247461.9">
    <molecule id="P27824-1"/>
    <property type="protein sequence ID" value="ENSP00000247461.4"/>
    <property type="gene ID" value="ENSG00000127022.16"/>
</dbReference>
<dbReference type="Ensembl" id="ENST00000452673.6">
    <molecule id="P27824-1"/>
    <property type="protein sequence ID" value="ENSP00000391646.2"/>
    <property type="gene ID" value="ENSG00000127022.16"/>
</dbReference>
<dbReference type="Ensembl" id="ENST00000502296.6">
    <molecule id="P27824-1"/>
    <property type="protein sequence ID" value="ENSP00000424745.2"/>
    <property type="gene ID" value="ENSG00000127022.16"/>
</dbReference>
<dbReference type="Ensembl" id="ENST00000504734.5">
    <molecule id="P27824-1"/>
    <property type="protein sequence ID" value="ENSP00000424063.1"/>
    <property type="gene ID" value="ENSG00000127022.16"/>
</dbReference>
<dbReference type="Ensembl" id="ENST00000506654.6">
    <molecule id="P27824-3"/>
    <property type="protein sequence ID" value="ENSP00000426555.2"/>
    <property type="gene ID" value="ENSG00000127022.16"/>
</dbReference>
<dbReference type="Ensembl" id="ENST00000509563.2">
    <molecule id="P27824-1"/>
    <property type="protein sequence ID" value="ENSP00000421434.2"/>
    <property type="gene ID" value="ENSG00000127022.16"/>
</dbReference>
<dbReference type="Ensembl" id="ENST00000513246.6">
    <molecule id="P27824-1"/>
    <property type="protein sequence ID" value="ENSP00000421813.2"/>
    <property type="gene ID" value="ENSG00000127022.16"/>
</dbReference>
<dbReference type="Ensembl" id="ENST00000638425.1">
    <molecule id="P27824-1"/>
    <property type="protein sequence ID" value="ENSP00000492372.1"/>
    <property type="gene ID" value="ENSG00000283777.2"/>
</dbReference>
<dbReference type="Ensembl" id="ENST00000638706.2">
    <molecule id="P27824-1"/>
    <property type="protein sequence ID" value="ENSP00000492868.1"/>
    <property type="gene ID" value="ENSG00000283777.2"/>
</dbReference>
<dbReference type="Ensembl" id="ENST00000639938.1">
    <molecule id="P27824-1"/>
    <property type="protein sequence ID" value="ENSP00000491760.1"/>
    <property type="gene ID" value="ENSG00000283777.2"/>
</dbReference>
<dbReference type="Ensembl" id="ENST00000680006.1">
    <molecule id="P27824-3"/>
    <property type="protein sequence ID" value="ENSP00000505129.1"/>
    <property type="gene ID" value="ENSG00000127022.16"/>
</dbReference>
<dbReference type="Ensembl" id="ENST00000680013.1">
    <molecule id="P27824-1"/>
    <property type="protein sequence ID" value="ENSP00000506078.1"/>
    <property type="gene ID" value="ENSG00000127022.16"/>
</dbReference>
<dbReference type="Ensembl" id="ENST00000680042.1">
    <molecule id="P27824-1"/>
    <property type="protein sequence ID" value="ENSP00000505960.1"/>
    <property type="gene ID" value="ENSG00000127022.16"/>
</dbReference>
<dbReference type="Ensembl" id="ENST00000680092.1">
    <molecule id="P27824-1"/>
    <property type="protein sequence ID" value="ENSP00000505202.1"/>
    <property type="gene ID" value="ENSG00000127022.16"/>
</dbReference>
<dbReference type="Ensembl" id="ENST00000680618.1">
    <molecule id="P27824-1"/>
    <property type="protein sequence ID" value="ENSP00000506583.1"/>
    <property type="gene ID" value="ENSG00000127022.16"/>
</dbReference>
<dbReference type="Ensembl" id="ENST00000680827.1">
    <molecule id="P27824-3"/>
    <property type="protein sequence ID" value="ENSP00000506051.1"/>
    <property type="gene ID" value="ENSG00000127022.16"/>
</dbReference>
<dbReference type="Ensembl" id="ENST00000681072.1">
    <molecule id="P27824-1"/>
    <property type="protein sequence ID" value="ENSP00000505526.1"/>
    <property type="gene ID" value="ENSG00000127022.16"/>
</dbReference>
<dbReference type="Ensembl" id="ENST00000681168.1">
    <molecule id="P27824-1"/>
    <property type="protein sequence ID" value="ENSP00000506021.1"/>
    <property type="gene ID" value="ENSG00000127022.16"/>
</dbReference>
<dbReference type="Ensembl" id="ENST00000681476.1">
    <molecule id="P27824-1"/>
    <property type="protein sequence ID" value="ENSP00000506003.1"/>
    <property type="gene ID" value="ENSG00000127022.16"/>
</dbReference>
<dbReference type="Ensembl" id="ENST00000681674.1">
    <molecule id="P27824-1"/>
    <property type="protein sequence ID" value="ENSP00000505013.1"/>
    <property type="gene ID" value="ENSG00000127022.16"/>
</dbReference>
<dbReference type="Ensembl" id="ENST00000681712.1">
    <molecule id="P27824-1"/>
    <property type="protein sequence ID" value="ENSP00000506061.1"/>
    <property type="gene ID" value="ENSG00000127022.16"/>
</dbReference>
<dbReference type="Ensembl" id="ENST00000681733.1">
    <molecule id="P27824-1"/>
    <property type="protein sequence ID" value="ENSP00000506568.1"/>
    <property type="gene ID" value="ENSG00000127022.16"/>
</dbReference>
<dbReference type="Ensembl" id="ENST00000681903.1">
    <molecule id="P27824-1"/>
    <property type="protein sequence ID" value="ENSP00000506509.1"/>
    <property type="gene ID" value="ENSG00000127022.16"/>
</dbReference>
<dbReference type="GeneID" id="821"/>
<dbReference type="KEGG" id="hsa:821"/>
<dbReference type="MANE-Select" id="ENST00000247461.9">
    <property type="protein sequence ID" value="ENSP00000247461.4"/>
    <property type="RefSeq nucleotide sequence ID" value="NM_001746.4"/>
    <property type="RefSeq protein sequence ID" value="NP_001737.1"/>
</dbReference>
<dbReference type="UCSC" id="uc003mkk.4">
    <molecule id="P27824-1"/>
    <property type="organism name" value="human"/>
</dbReference>
<dbReference type="AGR" id="HGNC:1473"/>
<dbReference type="CTD" id="821"/>
<dbReference type="DisGeNET" id="821"/>
<dbReference type="GeneCards" id="CANX"/>
<dbReference type="HGNC" id="HGNC:1473">
    <property type="gene designation" value="CANX"/>
</dbReference>
<dbReference type="HPA" id="ENSG00000127022">
    <property type="expression patterns" value="Low tissue specificity"/>
</dbReference>
<dbReference type="MIM" id="114217">
    <property type="type" value="gene"/>
</dbReference>
<dbReference type="neXtProt" id="NX_P27824"/>
<dbReference type="OpenTargets" id="ENSG00000127022"/>
<dbReference type="PharmGKB" id="PA26055"/>
<dbReference type="VEuPathDB" id="HostDB:ENSG00000127022"/>
<dbReference type="eggNOG" id="KOG0675">
    <property type="taxonomic scope" value="Eukaryota"/>
</dbReference>
<dbReference type="GeneTree" id="ENSGT00950000182915"/>
<dbReference type="HOGENOM" id="CLU_018224_2_0_1"/>
<dbReference type="InParanoid" id="P27824"/>
<dbReference type="OMA" id="QWEVDEM"/>
<dbReference type="OrthoDB" id="1938156at2759"/>
<dbReference type="PAN-GO" id="P27824">
    <property type="GO annotations" value="4 GO annotations based on evolutionary models"/>
</dbReference>
<dbReference type="PhylomeDB" id="P27824"/>
<dbReference type="TreeFam" id="TF300618"/>
<dbReference type="PathwayCommons" id="P27824"/>
<dbReference type="Reactome" id="R-HSA-168316">
    <property type="pathway name" value="Assembly of Viral Components at the Budding Site"/>
</dbReference>
<dbReference type="Reactome" id="R-HSA-2132295">
    <property type="pathway name" value="MHC class II antigen presentation"/>
</dbReference>
<dbReference type="Reactome" id="R-HSA-8984722">
    <property type="pathway name" value="Interleukin-35 Signalling"/>
</dbReference>
<dbReference type="Reactome" id="R-HSA-901042">
    <property type="pathway name" value="Calnexin/calreticulin cycle"/>
</dbReference>
<dbReference type="Reactome" id="R-HSA-9020956">
    <property type="pathway name" value="Interleukin-27 signaling"/>
</dbReference>
<dbReference type="Reactome" id="R-HSA-9683686">
    <property type="pathway name" value="Maturation of spike protein"/>
</dbReference>
<dbReference type="Reactome" id="R-HSA-9694548">
    <property type="pathway name" value="Maturation of spike protein"/>
</dbReference>
<dbReference type="Reactome" id="R-HSA-983170">
    <property type="pathway name" value="Antigen Presentation: Folding, assembly and peptide loading of class I MHC"/>
</dbReference>
<dbReference type="SignaLink" id="P27824"/>
<dbReference type="BioGRID-ORCS" id="821">
    <property type="hits" value="18 hits in 1165 CRISPR screens"/>
</dbReference>
<dbReference type="ChiTaRS" id="CANX">
    <property type="organism name" value="human"/>
</dbReference>
<dbReference type="GeneWiki" id="Calnexin"/>
<dbReference type="GenomeRNAi" id="821"/>
<dbReference type="Pharos" id="P27824">
    <property type="development level" value="Tbio"/>
</dbReference>
<dbReference type="PRO" id="PR:P27824"/>
<dbReference type="Proteomes" id="UP000005640">
    <property type="component" value="Chromosome 5"/>
</dbReference>
<dbReference type="RNAct" id="P27824">
    <property type="molecule type" value="protein"/>
</dbReference>
<dbReference type="Bgee" id="ENSG00000127022">
    <property type="expression patterns" value="Expressed in stromal cell of endometrium and 114 other cell types or tissues"/>
</dbReference>
<dbReference type="ExpressionAtlas" id="P27824">
    <property type="expression patterns" value="baseline and differential"/>
</dbReference>
<dbReference type="GO" id="GO:0005783">
    <property type="term" value="C:endoplasmic reticulum"/>
    <property type="evidence" value="ECO:0000314"/>
    <property type="project" value="HPA"/>
</dbReference>
<dbReference type="GO" id="GO:0005788">
    <property type="term" value="C:endoplasmic reticulum lumen"/>
    <property type="evidence" value="ECO:0000304"/>
    <property type="project" value="Reactome"/>
</dbReference>
<dbReference type="GO" id="GO:0005789">
    <property type="term" value="C:endoplasmic reticulum membrane"/>
    <property type="evidence" value="ECO:0000314"/>
    <property type="project" value="AgBase"/>
</dbReference>
<dbReference type="GO" id="GO:0044322">
    <property type="term" value="C:endoplasmic reticulum quality control compartment"/>
    <property type="evidence" value="ECO:0007669"/>
    <property type="project" value="Ensembl"/>
</dbReference>
<dbReference type="GO" id="GO:0070062">
    <property type="term" value="C:extracellular exosome"/>
    <property type="evidence" value="ECO:0007005"/>
    <property type="project" value="UniProtKB"/>
</dbReference>
<dbReference type="GO" id="GO:0098553">
    <property type="term" value="C:lumenal side of endoplasmic reticulum membrane"/>
    <property type="evidence" value="ECO:0000304"/>
    <property type="project" value="Reactome"/>
</dbReference>
<dbReference type="GO" id="GO:0033162">
    <property type="term" value="C:melanosome membrane"/>
    <property type="evidence" value="ECO:0007669"/>
    <property type="project" value="UniProtKB-SubCell"/>
</dbReference>
<dbReference type="GO" id="GO:0016020">
    <property type="term" value="C:membrane"/>
    <property type="evidence" value="ECO:0007005"/>
    <property type="project" value="UniProtKB"/>
</dbReference>
<dbReference type="GO" id="GO:0044233">
    <property type="term" value="C:mitochondria-associated endoplasmic reticulum membrane contact site"/>
    <property type="evidence" value="ECO:0000314"/>
    <property type="project" value="MGI"/>
</dbReference>
<dbReference type="GO" id="GO:0031966">
    <property type="term" value="C:mitochondrial membrane"/>
    <property type="evidence" value="ECO:0007669"/>
    <property type="project" value="UniProtKB-SubCell"/>
</dbReference>
<dbReference type="GO" id="GO:0031965">
    <property type="term" value="C:nuclear membrane"/>
    <property type="evidence" value="ECO:0007669"/>
    <property type="project" value="Ensembl"/>
</dbReference>
<dbReference type="GO" id="GO:0098793">
    <property type="term" value="C:presynapse"/>
    <property type="evidence" value="ECO:0007669"/>
    <property type="project" value="GOC"/>
</dbReference>
<dbReference type="GO" id="GO:0005509">
    <property type="term" value="F:calcium ion binding"/>
    <property type="evidence" value="ECO:0000318"/>
    <property type="project" value="GO_Central"/>
</dbReference>
<dbReference type="GO" id="GO:0030246">
    <property type="term" value="F:carbohydrate binding"/>
    <property type="evidence" value="ECO:0007669"/>
    <property type="project" value="UniProtKB-KW"/>
</dbReference>
<dbReference type="GO" id="GO:0003723">
    <property type="term" value="F:RNA binding"/>
    <property type="evidence" value="ECO:0007005"/>
    <property type="project" value="UniProtKB"/>
</dbReference>
<dbReference type="GO" id="GO:0051082">
    <property type="term" value="F:unfolded protein binding"/>
    <property type="evidence" value="ECO:0000304"/>
    <property type="project" value="Reactome"/>
</dbReference>
<dbReference type="GO" id="GO:0072583">
    <property type="term" value="P:clathrin-dependent endocytosis"/>
    <property type="evidence" value="ECO:0000250"/>
    <property type="project" value="UniProtKB"/>
</dbReference>
<dbReference type="GO" id="GO:0036503">
    <property type="term" value="P:ERAD pathway"/>
    <property type="evidence" value="ECO:0000318"/>
    <property type="project" value="GO_Central"/>
</dbReference>
<dbReference type="GO" id="GO:0006457">
    <property type="term" value="P:protein folding"/>
    <property type="evidence" value="ECO:0000318"/>
    <property type="project" value="GO_Central"/>
</dbReference>
<dbReference type="GO" id="GO:0034975">
    <property type="term" value="P:protein folding in endoplasmic reticulum"/>
    <property type="evidence" value="ECO:0000304"/>
    <property type="project" value="ParkinsonsUK-UCL"/>
</dbReference>
<dbReference type="GO" id="GO:0009306">
    <property type="term" value="P:protein secretion"/>
    <property type="evidence" value="ECO:0000304"/>
    <property type="project" value="ProtInc"/>
</dbReference>
<dbReference type="GO" id="GO:0048488">
    <property type="term" value="P:synaptic vesicle endocytosis"/>
    <property type="evidence" value="ECO:0000250"/>
    <property type="project" value="UniProtKB"/>
</dbReference>
<dbReference type="GO" id="GO:0019082">
    <property type="term" value="P:viral protein processing"/>
    <property type="evidence" value="ECO:0000304"/>
    <property type="project" value="Reactome"/>
</dbReference>
<dbReference type="FunFam" id="2.10.250.10:FF:000001">
    <property type="entry name" value="Calnexin homolog"/>
    <property type="match status" value="1"/>
</dbReference>
<dbReference type="FunFam" id="2.60.120.200:FF:000430">
    <property type="entry name" value="Si:ch211-274f20.2"/>
    <property type="match status" value="1"/>
</dbReference>
<dbReference type="Gene3D" id="2.60.120.200">
    <property type="match status" value="1"/>
</dbReference>
<dbReference type="Gene3D" id="2.10.250.10">
    <property type="entry name" value="Calreticulin/calnexin, P domain"/>
    <property type="match status" value="1"/>
</dbReference>
<dbReference type="InterPro" id="IPR001580">
    <property type="entry name" value="Calret/calnex"/>
</dbReference>
<dbReference type="InterPro" id="IPR018124">
    <property type="entry name" value="Calret/calnex_CS"/>
</dbReference>
<dbReference type="InterPro" id="IPR009033">
    <property type="entry name" value="Calreticulin/calnexin_P_dom_sf"/>
</dbReference>
<dbReference type="InterPro" id="IPR013320">
    <property type="entry name" value="ConA-like_dom_sf"/>
</dbReference>
<dbReference type="PANTHER" id="PTHR11073:SF11">
    <property type="entry name" value="CALNEXIN"/>
    <property type="match status" value="1"/>
</dbReference>
<dbReference type="PANTHER" id="PTHR11073">
    <property type="entry name" value="CALRETICULIN AND CALNEXIN"/>
    <property type="match status" value="1"/>
</dbReference>
<dbReference type="Pfam" id="PF00262">
    <property type="entry name" value="Calreticulin"/>
    <property type="match status" value="1"/>
</dbReference>
<dbReference type="PRINTS" id="PR00626">
    <property type="entry name" value="CALRETICULIN"/>
</dbReference>
<dbReference type="SUPFAM" id="SSF49899">
    <property type="entry name" value="Concanavalin A-like lectins/glucanases"/>
    <property type="match status" value="2"/>
</dbReference>
<dbReference type="SUPFAM" id="SSF63887">
    <property type="entry name" value="P-domain of calnexin/calreticulin"/>
    <property type="match status" value="1"/>
</dbReference>
<dbReference type="PROSITE" id="PS00803">
    <property type="entry name" value="CALRETICULIN_1"/>
    <property type="match status" value="1"/>
</dbReference>
<dbReference type="PROSITE" id="PS00804">
    <property type="entry name" value="CALRETICULIN_2"/>
    <property type="match status" value="1"/>
</dbReference>
<dbReference type="PROSITE" id="PS00805">
    <property type="entry name" value="CALRETICULIN_REPEAT"/>
    <property type="match status" value="3"/>
</dbReference>
<comment type="function">
    <text>Calcium-binding protein that interacts with newly synthesized monoglucosylated glycoproteins in the endoplasmic reticulum. It may act in assisting protein assembly and/or in the retention within the ER of unassembled protein subunits. It seems to play a major role in the quality control apparatus of the ER by the retention of incorrectly folded proteins. Associated with partial T-cell antigen receptor complexes that escape the ER of immature thymocytes, it may function as a signaling complex regulating thymocyte maturation. Additionally it may play a role in receptor-mediated endocytosis at the synapse.</text>
</comment>
<comment type="subunit">
    <text evidence="4 5 9 11 12 13 14 15 16 17 18">Interacts with MAPK3/ERK1 (By similarity). Interacts with KCNH2 (PubMed:16361248). Associates with ribosomes (By similarity). Interacts with SGIP1; involved in negative regulation of endocytosis (By similarity). The palmitoylated form interacts with the ribosome-translocon complex component SSR1, promoting efficient folding of glycoproteins (PubMed:22314232). Interacts with SERPINA2P/SERPINA2 and with the S and Z variants of SERPINA1 (PubMed:23826168). Interacts with PPIB (PubMed:20801878). Interacts with ZNRF4 (PubMed:21205830). Interacts with SMIM22 (PubMed:29765154). Interacts with TMX2 (PubMed:31735293). Interacts with TMEM35A/NACHO (By similarity). Interacts with CHRNA7 (PubMed:32783947). Interacts with reticulophagy regulators RETREG2 and RETREG3 (PubMed:34338405). Interacts with DNM1L; may form part of a larger protein complex at the ER-mitochondrial interface during mitochondrial fission (PubMed:24196833). Interacts with ADAM7 (By similarity).</text>
</comment>
<comment type="subunit">
    <text evidence="19">(Microbial infection) Interacts with HBV large envelope protein, isoform L.</text>
</comment>
<comment type="subunit">
    <text evidence="19">(Microbial infection) Interacts with HBV large envelope protein, isoform M; this association may be essential for isoform M proper secretion.</text>
</comment>
<comment type="interaction">
    <interactant intactId="EBI-355947">
        <id>P27824</id>
    </interactant>
    <interactant intactId="EBI-784112">
        <id>O95477</id>
        <label>ABCA1</label>
    </interactant>
    <organismsDiffer>false</organismsDiffer>
    <experiments>8</experiments>
</comment>
<comment type="interaction">
    <interactant intactId="EBI-355947">
        <id>P27824</id>
    </interactant>
    <interactant intactId="EBI-349854">
        <id>P13569</id>
        <label>CFTR</label>
    </interactant>
    <organismsDiffer>false</organismsDiffer>
    <experiments>26</experiments>
</comment>
<comment type="interaction">
    <interactant intactId="EBI-355947">
        <id>P27824</id>
    </interactant>
    <interactant intactId="EBI-11123530">
        <id>Q7LFX5</id>
        <label>CHST15</label>
    </interactant>
    <organismsDiffer>false</organismsDiffer>
    <experiments>3</experiments>
</comment>
<comment type="interaction">
    <interactant intactId="EBI-355947">
        <id>P27824</id>
    </interactant>
    <interactant intactId="EBI-16594440">
        <id>Q9UHC6-1</id>
        <label>CNTNAP2</label>
    </interactant>
    <organismsDiffer>false</organismsDiffer>
    <experiments>2</experiments>
</comment>
<comment type="interaction">
    <interactant intactId="EBI-355947">
        <id>P27824</id>
    </interactant>
    <interactant intactId="EBI-1046040">
        <id>P00387</id>
        <label>CYB5R3</label>
    </interactant>
    <organismsDiffer>false</organismsDiffer>
    <experiments>2</experiments>
</comment>
<comment type="interaction">
    <interactant intactId="EBI-355947">
        <id>P27824</id>
    </interactant>
    <interactant intactId="EBI-1051412">
        <id>O00115</id>
        <label>DNASE2</label>
    </interactant>
    <organismsDiffer>false</organismsDiffer>
    <experiments>2</experiments>
</comment>
<comment type="interaction">
    <interactant intactId="EBI-355947">
        <id>P27824</id>
    </interactant>
    <interactant intactId="EBI-716486">
        <id>Q92597</id>
        <label>NDRG1</label>
    </interactant>
    <organismsDiffer>false</organismsDiffer>
    <experiments>2</experiments>
</comment>
<comment type="interaction">
    <interactant intactId="EBI-355947">
        <id>P27824</id>
    </interactant>
    <interactant intactId="EBI-2624456">
        <id>P41143</id>
        <label>OPRD1</label>
    </interactant>
    <organismsDiffer>false</organismsDiffer>
    <experiments>2</experiments>
</comment>
<comment type="interaction">
    <interactant intactId="EBI-355947">
        <id>P27824</id>
    </interactant>
    <interactant intactId="EBI-352743">
        <id>P30050</id>
        <label>RPL12</label>
    </interactant>
    <organismsDiffer>false</organismsDiffer>
    <experiments>3</experiments>
</comment>
<comment type="interaction">
    <interactant intactId="EBI-355947">
        <id>P27824</id>
    </interactant>
    <interactant intactId="EBI-358919">
        <id>P61619</id>
        <label>SEC61A1</label>
    </interactant>
    <organismsDiffer>false</organismsDiffer>
    <experiments>5</experiments>
</comment>
<comment type="interaction">
    <interactant intactId="EBI-355947">
        <id>P27824</id>
    </interactant>
    <interactant intactId="EBI-714168">
        <id>P43307</id>
        <label>SSR1</label>
    </interactant>
    <organismsDiffer>false</organismsDiffer>
    <experiments>7</experiments>
</comment>
<comment type="interaction">
    <interactant intactId="EBI-355947">
        <id>P27824</id>
    </interactant>
    <interactant intactId="EBI-8004986">
        <id>P11607</id>
        <label>ATP2A2</label>
    </interactant>
    <organismsDiffer>true</organismsDiffer>
    <experiments>2</experiments>
</comment>
<comment type="interaction">
    <interactant intactId="EBI-355947">
        <id>P27824</id>
    </interactant>
    <interactant intactId="EBI-6163496">
        <id>P04578</id>
        <label>env</label>
    </interactant>
    <organismsDiffer>true</organismsDiffer>
    <experiments>3</experiments>
</comment>
<comment type="interaction">
    <interactant intactId="EBI-25890990">
        <id>P27824-2</id>
    </interactant>
    <interactant intactId="EBI-77613">
        <id>P05067</id>
        <label>APP</label>
    </interactant>
    <organismsDiffer>false</organismsDiffer>
    <experiments>3</experiments>
</comment>
<comment type="interaction">
    <interactant intactId="EBI-25890990">
        <id>P27824-2</id>
    </interactant>
    <interactant intactId="EBI-458391">
        <id>P04271</id>
        <label>S100B</label>
    </interactant>
    <organismsDiffer>false</organismsDiffer>
    <experiments>3</experiments>
</comment>
<comment type="interaction">
    <interactant intactId="EBI-25890990">
        <id>P27824-2</id>
    </interactant>
    <interactant intactId="EBI-25892332">
        <id>P43405-2</id>
        <label>SYK</label>
    </interactant>
    <organismsDiffer>false</organismsDiffer>
    <experiments>3</experiments>
</comment>
<comment type="subcellular location">
    <subcellularLocation>
        <location evidence="13">Endoplasmic reticulum membrane</location>
        <topology evidence="6">Single-pass type I membrane protein</topology>
    </subcellularLocation>
    <subcellularLocation>
        <location evidence="3">Mitochondrion membrane</location>
        <topology evidence="6">Single-pass type I membrane protein</topology>
    </subcellularLocation>
    <subcellularLocation>
        <location evidence="8 10">Melanosome membrane</location>
        <topology evidence="6">Single-pass type I membrane protein</topology>
    </subcellularLocation>
    <text evidence="3 8 10 13">Identified by mass spectrometry in melanosome fractions from stage I to stage IV (PubMed:12643545, PubMed:17081065). The palmitoylated form preferentially localizes to the perinuclear rough ER (PubMed:22314232). Localizes to endoplasmic reticulum mitochondria-associated membrane (MAMs) that connect the endoplasmic reticulum and the mitochondria (By similarity).</text>
</comment>
<comment type="alternative products">
    <event type="alternative splicing"/>
    <isoform>
        <id>P27824-1</id>
        <name>1</name>
        <sequence type="displayed"/>
    </isoform>
    <isoform>
        <id>P27824-2</id>
        <name>2</name>
        <sequence type="described" ref="VSP_055516"/>
    </isoform>
    <isoform>
        <id>P27824-3</id>
        <name>3</name>
        <sequence type="described" ref="VSP_055515"/>
    </isoform>
</comment>
<comment type="PTM">
    <text evidence="1">Phosphorylated at Ser-564 by MAPK3/ERK1. Phosphorylation by MAPK3/ERK1 increases its association with ribosomes (By similarity).</text>
</comment>
<comment type="PTM">
    <text evidence="13">Palmitoylation by DHHC6 leads to the preferential localization to the perinuclear rough ER. It mediates the association of calnexin with the ribosome-translocon complex (RTC) which is required for efficient folding of glycosylated proteins.</text>
</comment>
<comment type="PTM">
    <text evidence="12">Ubiquitinated, leading to proteasomal degradation. Probably ubiquitinated by ZNRF4.</text>
</comment>
<comment type="similarity">
    <text evidence="21">Belongs to the calreticulin family.</text>
</comment>
<comment type="online information" name="Wikipedia">
    <link uri="https://en.wikipedia.org/wiki/Calnexin"/>
    <text>Calnexin entry</text>
</comment>
<feature type="signal peptide" evidence="6 33">
    <location>
        <begin position="1"/>
        <end position="20"/>
    </location>
</feature>
<feature type="chain" id="PRO_0000004198" description="Calnexin">
    <location>
        <begin position="21"/>
        <end position="592"/>
    </location>
</feature>
<feature type="topological domain" description="Lumenal" evidence="6">
    <location>
        <begin position="21"/>
        <end position="481"/>
    </location>
</feature>
<feature type="transmembrane region" description="Helical" evidence="6">
    <location>
        <begin position="482"/>
        <end position="502"/>
    </location>
</feature>
<feature type="topological domain" description="Cytoplasmic" evidence="6">
    <location>
        <begin position="503"/>
        <end position="592"/>
    </location>
</feature>
<feature type="repeat" description="1-1">
    <location>
        <begin position="278"/>
        <end position="290"/>
    </location>
</feature>
<feature type="repeat" description="1-2">
    <location>
        <begin position="295"/>
        <end position="307"/>
    </location>
</feature>
<feature type="repeat" description="1-3">
    <location>
        <begin position="314"/>
        <end position="326"/>
    </location>
</feature>
<feature type="repeat" description="1-4">
    <location>
        <begin position="333"/>
        <end position="345"/>
    </location>
</feature>
<feature type="repeat" description="2-1">
    <location>
        <begin position="348"/>
        <end position="358"/>
    </location>
</feature>
<feature type="repeat" description="2-2">
    <location>
        <begin position="367"/>
        <end position="377"/>
    </location>
</feature>
<feature type="repeat" description="2-3">
    <location>
        <begin position="381"/>
        <end position="391"/>
    </location>
</feature>
<feature type="repeat" description="2-4">
    <location>
        <begin position="395"/>
        <end position="405"/>
    </location>
</feature>
<feature type="region of interest" description="Disordered" evidence="7">
    <location>
        <begin position="260"/>
        <end position="345"/>
    </location>
</feature>
<feature type="region of interest" description="P domain (Extended arm)" evidence="1">
    <location>
        <begin position="276"/>
        <end position="409"/>
    </location>
</feature>
<feature type="region of interest" description="4 X approximate repeats">
    <location>
        <begin position="278"/>
        <end position="345"/>
    </location>
</feature>
<feature type="region of interest" description="Interaction with PPIB" evidence="1">
    <location>
        <begin position="326"/>
        <end position="359"/>
    </location>
</feature>
<feature type="region of interest" description="4 X approximate repeats">
    <location>
        <begin position="348"/>
        <end position="405"/>
    </location>
</feature>
<feature type="region of interest" description="Sufficient to mediate interaction with SGIP1" evidence="1">
    <location>
        <begin position="503"/>
        <end position="592"/>
    </location>
</feature>
<feature type="region of interest" description="Disordered" evidence="7">
    <location>
        <begin position="511"/>
        <end position="592"/>
    </location>
</feature>
<feature type="compositionally biased region" description="Basic and acidic residues" evidence="7">
    <location>
        <begin position="274"/>
        <end position="319"/>
    </location>
</feature>
<feature type="compositionally biased region" description="Acidic residues" evidence="7">
    <location>
        <begin position="323"/>
        <end position="345"/>
    </location>
</feature>
<feature type="compositionally biased region" description="Acidic residues" evidence="7">
    <location>
        <begin position="525"/>
        <end position="547"/>
    </location>
</feature>
<feature type="binding site" evidence="3">
    <location>
        <position position="74"/>
    </location>
    <ligand>
        <name>Ca(2+)</name>
        <dbReference type="ChEBI" id="CHEBI:29108"/>
    </ligand>
</feature>
<feature type="binding site" evidence="3">
    <location>
        <position position="117"/>
    </location>
    <ligand>
        <name>Ca(2+)</name>
        <dbReference type="ChEBI" id="CHEBI:29108"/>
    </ligand>
</feature>
<feature type="binding site" evidence="2">
    <location>
        <position position="164"/>
    </location>
    <ligand>
        <name>an alpha-D-glucoside</name>
        <dbReference type="ChEBI" id="CHEBI:22390"/>
    </ligand>
</feature>
<feature type="binding site" evidence="2">
    <location>
        <position position="166"/>
    </location>
    <ligand>
        <name>an alpha-D-glucoside</name>
        <dbReference type="ChEBI" id="CHEBI:22390"/>
    </ligand>
</feature>
<feature type="binding site" evidence="2">
    <location>
        <position position="185"/>
    </location>
    <ligand>
        <name>an alpha-D-glucoside</name>
        <dbReference type="ChEBI" id="CHEBI:22390"/>
    </ligand>
</feature>
<feature type="binding site" evidence="2">
    <location>
        <position position="192"/>
    </location>
    <ligand>
        <name>an alpha-D-glucoside</name>
        <dbReference type="ChEBI" id="CHEBI:22390"/>
    </ligand>
</feature>
<feature type="binding site" evidence="2">
    <location>
        <position position="425"/>
    </location>
    <ligand>
        <name>an alpha-D-glucoside</name>
        <dbReference type="ChEBI" id="CHEBI:22390"/>
    </ligand>
</feature>
<feature type="binding site" evidence="3">
    <location>
        <position position="436"/>
    </location>
    <ligand>
        <name>Ca(2+)</name>
        <dbReference type="ChEBI" id="CHEBI:29108"/>
    </ligand>
</feature>
<feature type="modified residue" description="N6-acetyllysine" evidence="27">
    <location>
        <position position="137"/>
    </location>
</feature>
<feature type="modified residue" description="Phosphoserine" evidence="22 23 24 25 26 29 30 31 32">
    <location>
        <position position="554"/>
    </location>
</feature>
<feature type="modified residue" description="Phosphothreonine" evidence="30 31 32">
    <location>
        <position position="562"/>
    </location>
</feature>
<feature type="modified residue" description="Phosphoserine; by MAPK3" evidence="25 28 29 31 32">
    <location>
        <position position="564"/>
    </location>
</feature>
<feature type="modified residue" description="Phosphoserine" evidence="22 23 26 29 30 31 32">
    <location>
        <position position="583"/>
    </location>
</feature>
<feature type="lipid moiety-binding region" description="S-palmitoyl cysteine" evidence="13">
    <location>
        <position position="502"/>
    </location>
</feature>
<feature type="lipid moiety-binding region" description="S-palmitoyl cysteine" evidence="13">
    <location>
        <position position="503"/>
    </location>
</feature>
<feature type="disulfide bond" evidence="3">
    <location>
        <begin position="160"/>
        <end position="194"/>
    </location>
</feature>
<feature type="disulfide bond" evidence="3">
    <location>
        <begin position="360"/>
        <end position="366"/>
    </location>
</feature>
<feature type="splice variant" id="VSP_055515" description="In isoform 3." evidence="20">
    <location>
        <begin position="1"/>
        <end position="108"/>
    </location>
</feature>
<feature type="splice variant" id="VSP_055516" description="In isoform 2." evidence="20">
    <original>M</original>
    <variation>MADRRTPTPFAGCRLPRQRRARDASQVSAPGTRRIM</variation>
    <location>
        <position position="1"/>
    </location>
</feature>
<feature type="sequence conflict" description="In Ref. 2; AAA21749." evidence="21" ref="2">
    <original>F</original>
    <variation>L</variation>
    <location>
        <position position="179"/>
    </location>
</feature>
<feature type="sequence conflict" description="In Ref. 10; AAA35696." evidence="21" ref="10">
    <original>SDI</original>
    <variation>LTF</variation>
    <location>
        <begin position="431"/>
        <end position="433"/>
    </location>
</feature>
<feature type="sequence conflict" description="In Ref. 10; AAA35696." evidence="21" ref="10">
    <original>R</original>
    <variation>L</variation>
    <location>
        <position position="480"/>
    </location>
</feature>
<organism>
    <name type="scientific">Homo sapiens</name>
    <name type="common">Human</name>
    <dbReference type="NCBI Taxonomy" id="9606"/>
    <lineage>
        <taxon>Eukaryota</taxon>
        <taxon>Metazoa</taxon>
        <taxon>Chordata</taxon>
        <taxon>Craniata</taxon>
        <taxon>Vertebrata</taxon>
        <taxon>Euteleostomi</taxon>
        <taxon>Mammalia</taxon>
        <taxon>Eutheria</taxon>
        <taxon>Euarchontoglires</taxon>
        <taxon>Primates</taxon>
        <taxon>Haplorrhini</taxon>
        <taxon>Catarrhini</taxon>
        <taxon>Hominidae</taxon>
        <taxon>Homo</taxon>
    </lineage>
</organism>
<evidence type="ECO:0000250" key="1"/>
<evidence type="ECO:0000250" key="2">
    <source>
        <dbReference type="UniProtKB" id="P14211"/>
    </source>
</evidence>
<evidence type="ECO:0000250" key="3">
    <source>
        <dbReference type="UniProtKB" id="P24643"/>
    </source>
</evidence>
<evidence type="ECO:0000250" key="4">
    <source>
        <dbReference type="UniProtKB" id="P35564"/>
    </source>
</evidence>
<evidence type="ECO:0000250" key="5">
    <source>
        <dbReference type="UniProtKB" id="P35565"/>
    </source>
</evidence>
<evidence type="ECO:0000255" key="6"/>
<evidence type="ECO:0000256" key="7">
    <source>
        <dbReference type="SAM" id="MobiDB-lite"/>
    </source>
</evidence>
<evidence type="ECO:0000269" key="8">
    <source>
    </source>
</evidence>
<evidence type="ECO:0000269" key="9">
    <source>
    </source>
</evidence>
<evidence type="ECO:0000269" key="10">
    <source>
    </source>
</evidence>
<evidence type="ECO:0000269" key="11">
    <source>
    </source>
</evidence>
<evidence type="ECO:0000269" key="12">
    <source>
    </source>
</evidence>
<evidence type="ECO:0000269" key="13">
    <source>
    </source>
</evidence>
<evidence type="ECO:0000269" key="14">
    <source>
    </source>
</evidence>
<evidence type="ECO:0000269" key="15">
    <source>
    </source>
</evidence>
<evidence type="ECO:0000269" key="16">
    <source>
    </source>
</evidence>
<evidence type="ECO:0000269" key="17">
    <source>
    </source>
</evidence>
<evidence type="ECO:0000269" key="18">
    <source>
    </source>
</evidence>
<evidence type="ECO:0000269" key="19">
    <source>
    </source>
</evidence>
<evidence type="ECO:0000303" key="20">
    <source>
    </source>
</evidence>
<evidence type="ECO:0000305" key="21"/>
<evidence type="ECO:0007744" key="22">
    <source>
    </source>
</evidence>
<evidence type="ECO:0007744" key="23">
    <source>
    </source>
</evidence>
<evidence type="ECO:0007744" key="24">
    <source>
    </source>
</evidence>
<evidence type="ECO:0007744" key="25">
    <source>
    </source>
</evidence>
<evidence type="ECO:0007744" key="26">
    <source>
    </source>
</evidence>
<evidence type="ECO:0007744" key="27">
    <source>
    </source>
</evidence>
<evidence type="ECO:0007744" key="28">
    <source>
    </source>
</evidence>
<evidence type="ECO:0007744" key="29">
    <source>
    </source>
</evidence>
<evidence type="ECO:0007744" key="30">
    <source>
    </source>
</evidence>
<evidence type="ECO:0007744" key="31">
    <source>
    </source>
</evidence>
<evidence type="ECO:0007744" key="32">
    <source>
    </source>
</evidence>
<evidence type="ECO:0007744" key="33">
    <source>
    </source>
</evidence>
<accession>P27824</accession>
<accession>B2R5V8</accession>
<accession>B4DGP8</accession>
<accession>B4E2T8</accession>
<accession>D3DWQ3</accession>
<accession>D6R9K3</accession>
<reference key="1">
    <citation type="journal article" date="1993" name="J. Biol. Chem.">
        <title>Interaction with newly synthesized and retained proteins in the endoplasmic reticulum suggests a chaperone function for human integral membrane protein IP90 (calnexin).</title>
        <authorList>
            <person name="David V."/>
            <person name="Hochstenbach F."/>
            <person name="Rajagopalan S."/>
            <person name="Brenner M.B."/>
        </authorList>
    </citation>
    <scope>NUCLEOTIDE SEQUENCE [MRNA] (ISOFORM 1)</scope>
</reference>
<reference key="2">
    <citation type="journal article" date="1994" name="Biochemistry">
        <title>Human, mouse, and rat calnexin cDNA cloning: identification of potential calcium binding motifs and gene localization to human chromosome 5.</title>
        <authorList>
            <person name="Tjoelker L.W."/>
            <person name="Seyfried C.E."/>
            <person name="Eddy R.L. Jr."/>
            <person name="Shows T.B. Jr."/>
            <person name="Calderon J."/>
            <person name="Schreiber R.B."/>
            <person name="Gray P.W."/>
        </authorList>
    </citation>
    <scope>NUCLEOTIDE SEQUENCE [MRNA] (ISOFORM 1)</scope>
    <source>
        <tissue>Lymph</tissue>
        <tissue>Placenta</tissue>
    </source>
</reference>
<reference key="3">
    <citation type="journal article" date="1994" name="Electrophoresis">
        <title>The molecular chaperones HSP28, GRP78, endoplasmin, and calnexin exhibit strikingly different levels in quiescent keratinocytes as compared to their proliferating normal and transformed counterparts: cDNA cloning and expression of calnexin.</title>
        <authorList>
            <person name="Honore B."/>
            <person name="Rasmussen H.H."/>
            <person name="Celis A."/>
            <person name="Leffers H."/>
            <person name="Madsen P."/>
            <person name="Celis J.E."/>
        </authorList>
    </citation>
    <scope>NUCLEOTIDE SEQUENCE [MRNA] (ISOFORM 1)</scope>
    <source>
        <tissue>Keratinocyte</tissue>
    </source>
</reference>
<reference key="4">
    <citation type="submission" date="2000-02" db="EMBL/GenBank/DDBJ databases">
        <authorList>
            <person name="Hansen J.J."/>
            <person name="Jorgensen M.M."/>
            <person name="Bolund L."/>
            <person name="Gregersen N."/>
        </authorList>
    </citation>
    <scope>NUCLEOTIDE SEQUENCE [MRNA] (ISOFORM 1)</scope>
    <source>
        <tissue>Fibroblast</tissue>
    </source>
</reference>
<reference key="5">
    <citation type="journal article" date="2004" name="Nat. Genet.">
        <title>Complete sequencing and characterization of 21,243 full-length human cDNAs.</title>
        <authorList>
            <person name="Ota T."/>
            <person name="Suzuki Y."/>
            <person name="Nishikawa T."/>
            <person name="Otsuki T."/>
            <person name="Sugiyama T."/>
            <person name="Irie R."/>
            <person name="Wakamatsu A."/>
            <person name="Hayashi K."/>
            <person name="Sato H."/>
            <person name="Nagai K."/>
            <person name="Kimura K."/>
            <person name="Makita H."/>
            <person name="Sekine M."/>
            <person name="Obayashi M."/>
            <person name="Nishi T."/>
            <person name="Shibahara T."/>
            <person name="Tanaka T."/>
            <person name="Ishii S."/>
            <person name="Yamamoto J."/>
            <person name="Saito K."/>
            <person name="Kawai Y."/>
            <person name="Isono Y."/>
            <person name="Nakamura Y."/>
            <person name="Nagahari K."/>
            <person name="Murakami K."/>
            <person name="Yasuda T."/>
            <person name="Iwayanagi T."/>
            <person name="Wagatsuma M."/>
            <person name="Shiratori A."/>
            <person name="Sudo H."/>
            <person name="Hosoiri T."/>
            <person name="Kaku Y."/>
            <person name="Kodaira H."/>
            <person name="Kondo H."/>
            <person name="Sugawara M."/>
            <person name="Takahashi M."/>
            <person name="Kanda K."/>
            <person name="Yokoi T."/>
            <person name="Furuya T."/>
            <person name="Kikkawa E."/>
            <person name="Omura Y."/>
            <person name="Abe K."/>
            <person name="Kamihara K."/>
            <person name="Katsuta N."/>
            <person name="Sato K."/>
            <person name="Tanikawa M."/>
            <person name="Yamazaki M."/>
            <person name="Ninomiya K."/>
            <person name="Ishibashi T."/>
            <person name="Yamashita H."/>
            <person name="Murakawa K."/>
            <person name="Fujimori K."/>
            <person name="Tanai H."/>
            <person name="Kimata M."/>
            <person name="Watanabe M."/>
            <person name="Hiraoka S."/>
            <person name="Chiba Y."/>
            <person name="Ishida S."/>
            <person name="Ono Y."/>
            <person name="Takiguchi S."/>
            <person name="Watanabe S."/>
            <person name="Yosida M."/>
            <person name="Hotuta T."/>
            <person name="Kusano J."/>
            <person name="Kanehori K."/>
            <person name="Takahashi-Fujii A."/>
            <person name="Hara H."/>
            <person name="Tanase T.-O."/>
            <person name="Nomura Y."/>
            <person name="Togiya S."/>
            <person name="Komai F."/>
            <person name="Hara R."/>
            <person name="Takeuchi K."/>
            <person name="Arita M."/>
            <person name="Imose N."/>
            <person name="Musashino K."/>
            <person name="Yuuki H."/>
            <person name="Oshima A."/>
            <person name="Sasaki N."/>
            <person name="Aotsuka S."/>
            <person name="Yoshikawa Y."/>
            <person name="Matsunawa H."/>
            <person name="Ichihara T."/>
            <person name="Shiohata N."/>
            <person name="Sano S."/>
            <person name="Moriya S."/>
            <person name="Momiyama H."/>
            <person name="Satoh N."/>
            <person name="Takami S."/>
            <person name="Terashima Y."/>
            <person name="Suzuki O."/>
            <person name="Nakagawa S."/>
            <person name="Senoh A."/>
            <person name="Mizoguchi H."/>
            <person name="Goto Y."/>
            <person name="Shimizu F."/>
            <person name="Wakebe H."/>
            <person name="Hishigaki H."/>
            <person name="Watanabe T."/>
            <person name="Sugiyama A."/>
            <person name="Takemoto M."/>
            <person name="Kawakami B."/>
            <person name="Yamazaki M."/>
            <person name="Watanabe K."/>
            <person name="Kumagai A."/>
            <person name="Itakura S."/>
            <person name="Fukuzumi Y."/>
            <person name="Fujimori Y."/>
            <person name="Komiyama M."/>
            <person name="Tashiro H."/>
            <person name="Tanigami A."/>
            <person name="Fujiwara T."/>
            <person name="Ono T."/>
            <person name="Yamada K."/>
            <person name="Fujii Y."/>
            <person name="Ozaki K."/>
            <person name="Hirao M."/>
            <person name="Ohmori Y."/>
            <person name="Kawabata A."/>
            <person name="Hikiji T."/>
            <person name="Kobatake N."/>
            <person name="Inagaki H."/>
            <person name="Ikema Y."/>
            <person name="Okamoto S."/>
            <person name="Okitani R."/>
            <person name="Kawakami T."/>
            <person name="Noguchi S."/>
            <person name="Itoh T."/>
            <person name="Shigeta K."/>
            <person name="Senba T."/>
            <person name="Matsumura K."/>
            <person name="Nakajima Y."/>
            <person name="Mizuno T."/>
            <person name="Morinaga M."/>
            <person name="Sasaki M."/>
            <person name="Togashi T."/>
            <person name="Oyama M."/>
            <person name="Hata H."/>
            <person name="Watanabe M."/>
            <person name="Komatsu T."/>
            <person name="Mizushima-Sugano J."/>
            <person name="Satoh T."/>
            <person name="Shirai Y."/>
            <person name="Takahashi Y."/>
            <person name="Nakagawa K."/>
            <person name="Okumura K."/>
            <person name="Nagase T."/>
            <person name="Nomura N."/>
            <person name="Kikuchi H."/>
            <person name="Masuho Y."/>
            <person name="Yamashita R."/>
            <person name="Nakai K."/>
            <person name="Yada T."/>
            <person name="Nakamura Y."/>
            <person name="Ohara O."/>
            <person name="Isogai T."/>
            <person name="Sugano S."/>
        </authorList>
    </citation>
    <scope>NUCLEOTIDE SEQUENCE [LARGE SCALE MRNA] (ISOFORMS 1; 2 AND 3)</scope>
    <source>
        <tissue>Brain</tissue>
        <tissue>Cerebellum</tissue>
        <tissue>Trachea</tissue>
    </source>
</reference>
<reference key="6">
    <citation type="journal article" date="2004" name="Nature">
        <title>The DNA sequence and comparative analysis of human chromosome 5.</title>
        <authorList>
            <person name="Schmutz J."/>
            <person name="Martin J."/>
            <person name="Terry A."/>
            <person name="Couronne O."/>
            <person name="Grimwood J."/>
            <person name="Lowry S."/>
            <person name="Gordon L.A."/>
            <person name="Scott D."/>
            <person name="Xie G."/>
            <person name="Huang W."/>
            <person name="Hellsten U."/>
            <person name="Tran-Gyamfi M."/>
            <person name="She X."/>
            <person name="Prabhakar S."/>
            <person name="Aerts A."/>
            <person name="Altherr M."/>
            <person name="Bajorek E."/>
            <person name="Black S."/>
            <person name="Branscomb E."/>
            <person name="Caoile C."/>
            <person name="Challacombe J.F."/>
            <person name="Chan Y.M."/>
            <person name="Denys M."/>
            <person name="Detter J.C."/>
            <person name="Escobar J."/>
            <person name="Flowers D."/>
            <person name="Fotopulos D."/>
            <person name="Glavina T."/>
            <person name="Gomez M."/>
            <person name="Gonzales E."/>
            <person name="Goodstein D."/>
            <person name="Grigoriev I."/>
            <person name="Groza M."/>
            <person name="Hammon N."/>
            <person name="Hawkins T."/>
            <person name="Haydu L."/>
            <person name="Israni S."/>
            <person name="Jett J."/>
            <person name="Kadner K."/>
            <person name="Kimball H."/>
            <person name="Kobayashi A."/>
            <person name="Lopez F."/>
            <person name="Lou Y."/>
            <person name="Martinez D."/>
            <person name="Medina C."/>
            <person name="Morgan J."/>
            <person name="Nandkeshwar R."/>
            <person name="Noonan J.P."/>
            <person name="Pitluck S."/>
            <person name="Pollard M."/>
            <person name="Predki P."/>
            <person name="Priest J."/>
            <person name="Ramirez L."/>
            <person name="Retterer J."/>
            <person name="Rodriguez A."/>
            <person name="Rogers S."/>
            <person name="Salamov A."/>
            <person name="Salazar A."/>
            <person name="Thayer N."/>
            <person name="Tice H."/>
            <person name="Tsai M."/>
            <person name="Ustaszewska A."/>
            <person name="Vo N."/>
            <person name="Wheeler J."/>
            <person name="Wu K."/>
            <person name="Yang J."/>
            <person name="Dickson M."/>
            <person name="Cheng J.-F."/>
            <person name="Eichler E.E."/>
            <person name="Olsen A."/>
            <person name="Pennacchio L.A."/>
            <person name="Rokhsar D.S."/>
            <person name="Richardson P."/>
            <person name="Lucas S.M."/>
            <person name="Myers R.M."/>
            <person name="Rubin E.M."/>
        </authorList>
    </citation>
    <scope>NUCLEOTIDE SEQUENCE [LARGE SCALE GENOMIC DNA]</scope>
</reference>
<reference key="7">
    <citation type="submission" date="2005-09" db="EMBL/GenBank/DDBJ databases">
        <authorList>
            <person name="Mural R.J."/>
            <person name="Istrail S."/>
            <person name="Sutton G.G."/>
            <person name="Florea L."/>
            <person name="Halpern A.L."/>
            <person name="Mobarry C.M."/>
            <person name="Lippert R."/>
            <person name="Walenz B."/>
            <person name="Shatkay H."/>
            <person name="Dew I."/>
            <person name="Miller J.R."/>
            <person name="Flanigan M.J."/>
            <person name="Edwards N.J."/>
            <person name="Bolanos R."/>
            <person name="Fasulo D."/>
            <person name="Halldorsson B.V."/>
            <person name="Hannenhalli S."/>
            <person name="Turner R."/>
            <person name="Yooseph S."/>
            <person name="Lu F."/>
            <person name="Nusskern D.R."/>
            <person name="Shue B.C."/>
            <person name="Zheng X.H."/>
            <person name="Zhong F."/>
            <person name="Delcher A.L."/>
            <person name="Huson D.H."/>
            <person name="Kravitz S.A."/>
            <person name="Mouchard L."/>
            <person name="Reinert K."/>
            <person name="Remington K.A."/>
            <person name="Clark A.G."/>
            <person name="Waterman M.S."/>
            <person name="Eichler E.E."/>
            <person name="Adams M.D."/>
            <person name="Hunkapiller M.W."/>
            <person name="Myers E.W."/>
            <person name="Venter J.C."/>
        </authorList>
    </citation>
    <scope>NUCLEOTIDE SEQUENCE [LARGE SCALE GENOMIC DNA]</scope>
</reference>
<reference key="8">
    <citation type="journal article" date="2004" name="Genome Res.">
        <title>The status, quality, and expansion of the NIH full-length cDNA project: the Mammalian Gene Collection (MGC).</title>
        <authorList>
            <consortium name="The MGC Project Team"/>
        </authorList>
    </citation>
    <scope>NUCLEOTIDE SEQUENCE [LARGE SCALE MRNA] (ISOFORM 1)</scope>
    <source>
        <tissue>Placenta</tissue>
    </source>
</reference>
<reference key="9">
    <citation type="submission" date="2005-03" db="UniProtKB">
        <authorList>
            <person name="Bienvenut W.V."/>
        </authorList>
    </citation>
    <scope>PROTEIN SEQUENCE OF 62-77; 171-193; 200-205; 221-227; 401-415; 517-525 AND 574-582</scope>
    <scope>IDENTIFICATION BY MASS SPECTROMETRY</scope>
    <source>
        <tissue>B-cell lymphoma</tissue>
    </source>
</reference>
<reference key="10">
    <citation type="journal article" date="1992" name="Proc. Natl. Acad. Sci. U.S.A.">
        <title>The major histocompatibility complex class I antigen-binding protein p88 is the product of the calnexin gene.</title>
        <authorList>
            <person name="Galvin K."/>
            <person name="Krishna S."/>
            <person name="Ponchel F."/>
            <person name="Frohlich M."/>
            <person name="Cummings D.E."/>
            <person name="Carlson R."/>
            <person name="Wands J.R."/>
            <person name="Isselbacher K.J."/>
            <person name="Pillai S."/>
            <person name="Ozturk M."/>
        </authorList>
    </citation>
    <scope>NUCLEOTIDE SEQUENCE [MRNA] OF 237-592 (ISOFORM 1)</scope>
</reference>
<reference key="11">
    <citation type="journal article" date="1992" name="Electrophoresis">
        <title>Microsequences of 145 proteins recorded in the two-dimensional gel protein database of normal human epidermal keratinocytes.</title>
        <authorList>
            <person name="Rasmussen H.H."/>
            <person name="van Damme J."/>
            <person name="Puype M."/>
            <person name="Gesser B."/>
            <person name="Celis J.E."/>
            <person name="Vandekerckhove J."/>
        </authorList>
    </citation>
    <scope>PROTEIN SEQUENCE OF 275-286; 293-313; 383-398 AND 516-523</scope>
    <source>
        <tissue>Keratinocyte</tissue>
    </source>
</reference>
<reference key="12">
    <citation type="journal article" date="1997" name="J. Virol.">
        <title>Formation of intracellular particles by hepatitis B virus large surface protein.</title>
        <authorList>
            <person name="Xu Z."/>
            <person name="Bruss V."/>
            <person name="Yen T.S."/>
        </authorList>
    </citation>
    <scope>INTERACTION WITH HBV LARGE ENVELOPE PROTEIN ISOFORM L (MICROBIAL INFECTION)</scope>
</reference>
<reference key="13">
    <citation type="journal article" date="1998" name="J. Virol.">
        <title>Role for calnexin and N-linked glycosylation in the assembly and secretion of hepatitis B virus middle envelope protein particles.</title>
        <authorList>
            <person name="Werr M."/>
            <person name="Prange R."/>
        </authorList>
    </citation>
    <scope>INTERACTION WITH HBV LARGE ENVELOPE PROTEIN ISOFORM M (MICROBIAL INFECTION)</scope>
</reference>
<reference key="14">
    <citation type="journal article" date="2003" name="J. Proteome Res.">
        <title>Proteomic analysis of early melanosomes: identification of novel melanosomal proteins.</title>
        <authorList>
            <person name="Basrur V."/>
            <person name="Yang F."/>
            <person name="Kushimoto T."/>
            <person name="Higashimoto Y."/>
            <person name="Yasumoto K."/>
            <person name="Valencia J."/>
            <person name="Muller J."/>
            <person name="Vieira W.D."/>
            <person name="Watabe H."/>
            <person name="Shabanowitz J."/>
            <person name="Hearing V.J."/>
            <person name="Hunt D.F."/>
            <person name="Appella E."/>
        </authorList>
    </citation>
    <scope>SUBCELLULAR LOCATION [LARGE SCALE ANALYSIS]</scope>
    <source>
        <tissue>Melanoma</tissue>
    </source>
</reference>
<reference key="15">
    <citation type="journal article" date="2006" name="Cell">
        <title>Global, in vivo, and site-specific phosphorylation dynamics in signaling networks.</title>
        <authorList>
            <person name="Olsen J.V."/>
            <person name="Blagoev B."/>
            <person name="Gnad F."/>
            <person name="Macek B."/>
            <person name="Kumar C."/>
            <person name="Mortensen P."/>
            <person name="Mann M."/>
        </authorList>
    </citation>
    <scope>PHOSPHORYLATION [LARGE SCALE ANALYSIS] AT SER-554 AND SER-583</scope>
    <scope>IDENTIFICATION BY MASS SPECTROMETRY [LARGE SCALE ANALYSIS]</scope>
    <source>
        <tissue>Cervix carcinoma</tissue>
    </source>
</reference>
<reference key="16">
    <citation type="journal article" date="2006" name="J. Biol. Chem.">
        <title>Mechanisms of pharmacological rescue of trafficking-defective hERG mutant channels in human long QT syndrome.</title>
        <authorList>
            <person name="Gong Q."/>
            <person name="Jones M.A."/>
            <person name="Zhou Z."/>
        </authorList>
    </citation>
    <scope>INTERACTION WITH KCNH2</scope>
</reference>
<reference key="17">
    <citation type="journal article" date="2006" name="J. Proteome Res.">
        <title>Proteomic and bioinformatic characterization of the biogenesis and function of melanosomes.</title>
        <authorList>
            <person name="Chi A."/>
            <person name="Valencia J.C."/>
            <person name="Hu Z.-Z."/>
            <person name="Watabe H."/>
            <person name="Yamaguchi H."/>
            <person name="Mangini N.J."/>
            <person name="Huang H."/>
            <person name="Canfield V.A."/>
            <person name="Cheng K.C."/>
            <person name="Yang F."/>
            <person name="Abe R."/>
            <person name="Yamagishi S."/>
            <person name="Shabanowitz J."/>
            <person name="Hearing V.J."/>
            <person name="Wu C."/>
            <person name="Appella E."/>
            <person name="Hunt D.F."/>
        </authorList>
    </citation>
    <scope>SUBCELLULAR LOCATION [LARGE SCALE ANALYSIS]</scope>
    <source>
        <tissue>Melanoma</tissue>
    </source>
</reference>
<reference key="18">
    <citation type="journal article" date="2008" name="J. Proteome Res.">
        <title>Phosphoproteome of resting human platelets.</title>
        <authorList>
            <person name="Zahedi R.P."/>
            <person name="Lewandrowski U."/>
            <person name="Wiesner J."/>
            <person name="Wortelkamp S."/>
            <person name="Moebius J."/>
            <person name="Schuetz C."/>
            <person name="Walter U."/>
            <person name="Gambaryan S."/>
            <person name="Sickmann A."/>
        </authorList>
    </citation>
    <scope>PHOSPHORYLATION [LARGE SCALE ANALYSIS] AT SER-554 AND SER-583</scope>
    <scope>IDENTIFICATION BY MASS SPECTROMETRY [LARGE SCALE ANALYSIS]</scope>
    <source>
        <tissue>Platelet</tissue>
    </source>
</reference>
<reference key="19">
    <citation type="journal article" date="2008" name="Mol. Cell">
        <title>Kinase-selective enrichment enables quantitative phosphoproteomics of the kinome across the cell cycle.</title>
        <authorList>
            <person name="Daub H."/>
            <person name="Olsen J.V."/>
            <person name="Bairlein M."/>
            <person name="Gnad F."/>
            <person name="Oppermann F.S."/>
            <person name="Korner R."/>
            <person name="Greff Z."/>
            <person name="Keri G."/>
            <person name="Stemmann O."/>
            <person name="Mann M."/>
        </authorList>
    </citation>
    <scope>PHOSPHORYLATION [LARGE SCALE ANALYSIS] AT SER-554 AND SER-583</scope>
    <scope>IDENTIFICATION BY MASS SPECTROMETRY [LARGE SCALE ANALYSIS]</scope>
    <source>
        <tissue>Cervix carcinoma</tissue>
    </source>
</reference>
<reference key="20">
    <citation type="journal article" date="2008" name="Proc. Natl. Acad. Sci. U.S.A.">
        <title>A quantitative atlas of mitotic phosphorylation.</title>
        <authorList>
            <person name="Dephoure N."/>
            <person name="Zhou C."/>
            <person name="Villen J."/>
            <person name="Beausoleil S.A."/>
            <person name="Bakalarski C.E."/>
            <person name="Elledge S.J."/>
            <person name="Gygi S.P."/>
        </authorList>
    </citation>
    <scope>PHOSPHORYLATION [LARGE SCALE ANALYSIS] AT SER-554 AND SER-564</scope>
    <scope>IDENTIFICATION BY MASS SPECTROMETRY [LARGE SCALE ANALYSIS]</scope>
    <source>
        <tissue>Cervix carcinoma</tissue>
    </source>
</reference>
<reference key="21">
    <citation type="journal article" date="2008" name="Proteomics">
        <title>Large-scale phosphoproteome analysis of human liver tissue by enrichment and fractionation of phosphopeptides with strong anion exchange chromatography.</title>
        <authorList>
            <person name="Han G."/>
            <person name="Ye M."/>
            <person name="Zhou H."/>
            <person name="Jiang X."/>
            <person name="Feng S."/>
            <person name="Jiang X."/>
            <person name="Tian R."/>
            <person name="Wan D."/>
            <person name="Zou H."/>
            <person name="Gu J."/>
        </authorList>
    </citation>
    <scope>PHOSPHORYLATION [LARGE SCALE ANALYSIS] AT SER-554</scope>
    <scope>IDENTIFICATION BY MASS SPECTROMETRY [LARGE SCALE ANALYSIS]</scope>
    <source>
        <tissue>Liver</tissue>
    </source>
</reference>
<reference key="22">
    <citation type="journal article" date="2009" name="Mol. Cell. Proteomics">
        <title>Large-scale proteomics analysis of the human kinome.</title>
        <authorList>
            <person name="Oppermann F.S."/>
            <person name="Gnad F."/>
            <person name="Olsen J.V."/>
            <person name="Hornberger R."/>
            <person name="Greff Z."/>
            <person name="Keri G."/>
            <person name="Mann M."/>
            <person name="Daub H."/>
        </authorList>
    </citation>
    <scope>IDENTIFICATION BY MASS SPECTROMETRY [LARGE SCALE ANALYSIS]</scope>
</reference>
<reference key="23">
    <citation type="journal article" date="2009" name="Sci. Signal.">
        <title>Quantitative phosphoproteomic analysis of T cell receptor signaling reveals system-wide modulation of protein-protein interactions.</title>
        <authorList>
            <person name="Mayya V."/>
            <person name="Lundgren D.H."/>
            <person name="Hwang S.-I."/>
            <person name="Rezaul K."/>
            <person name="Wu L."/>
            <person name="Eng J.K."/>
            <person name="Rodionov V."/>
            <person name="Han D.K."/>
        </authorList>
    </citation>
    <scope>PHOSPHORYLATION [LARGE SCALE ANALYSIS] AT SER-564</scope>
    <scope>IDENTIFICATION BY MASS SPECTROMETRY [LARGE SCALE ANALYSIS]</scope>
    <source>
        <tissue>Leukemic T-cell</tissue>
    </source>
</reference>
<reference key="24">
    <citation type="journal article" date="2009" name="Science">
        <title>Lysine acetylation targets protein complexes and co-regulates major cellular functions.</title>
        <authorList>
            <person name="Choudhary C."/>
            <person name="Kumar C."/>
            <person name="Gnad F."/>
            <person name="Nielsen M.L."/>
            <person name="Rehman M."/>
            <person name="Walther T.C."/>
            <person name="Olsen J.V."/>
            <person name="Mann M."/>
        </authorList>
    </citation>
    <scope>ACETYLATION [LARGE SCALE ANALYSIS] AT LYS-137</scope>
    <scope>IDENTIFICATION BY MASS SPECTROMETRY [LARGE SCALE ANALYSIS]</scope>
</reference>
<reference key="25">
    <citation type="journal article" date="2010" name="J. Biol. Chem.">
        <title>Structural basis of cyclophilin B binding by the calnexin/calreticulin P-domain.</title>
        <authorList>
            <person name="Kozlov G."/>
            <person name="Bastos-Aristizabal S."/>
            <person name="Maattanen P."/>
            <person name="Rosenauer A."/>
            <person name="Zheng F."/>
            <person name="Killikelly A."/>
            <person name="Trempe J.F."/>
            <person name="Thomas D.Y."/>
            <person name="Gehring K."/>
        </authorList>
    </citation>
    <scope>INTERACTION WITH PPIB</scope>
</reference>
<reference key="26">
    <citation type="journal article" date="2010" name="Sci. Signal.">
        <title>Quantitative phosphoproteomics reveals widespread full phosphorylation site occupancy during mitosis.</title>
        <authorList>
            <person name="Olsen J.V."/>
            <person name="Vermeulen M."/>
            <person name="Santamaria A."/>
            <person name="Kumar C."/>
            <person name="Miller M.L."/>
            <person name="Jensen L.J."/>
            <person name="Gnad F."/>
            <person name="Cox J."/>
            <person name="Jensen T.S."/>
            <person name="Nigg E.A."/>
            <person name="Brunak S."/>
            <person name="Mann M."/>
        </authorList>
    </citation>
    <scope>PHOSPHORYLATION [LARGE SCALE ANALYSIS] AT SER-554; SER-564 AND SER-583</scope>
    <scope>IDENTIFICATION BY MASS SPECTROMETRY [LARGE SCALE ANALYSIS]</scope>
    <source>
        <tissue>Cervix carcinoma</tissue>
    </source>
</reference>
<reference key="27">
    <citation type="journal article" date="2011" name="BMC Syst. Biol.">
        <title>Initial characterization of the human central proteome.</title>
        <authorList>
            <person name="Burkard T.R."/>
            <person name="Planyavsky M."/>
            <person name="Kaupe I."/>
            <person name="Breitwieser F.P."/>
            <person name="Buerckstuemmer T."/>
            <person name="Bennett K.L."/>
            <person name="Superti-Furga G."/>
            <person name="Colinge J."/>
        </authorList>
    </citation>
    <scope>IDENTIFICATION BY MASS SPECTROMETRY [LARGE SCALE ANALYSIS]</scope>
</reference>
<reference key="28">
    <citation type="journal article" date="2011" name="J. Biol. Chem.">
        <title>A systematic search for endoplasmic reticulum (ER) membrane-associated RING finger proteins identifies Nixin/ZNRF4 as a regulator of calnexin stability and ER homeostasis.</title>
        <authorList>
            <person name="Neutzner A."/>
            <person name="Neutzner M."/>
            <person name="Benischke A.S."/>
            <person name="Ryu S.W."/>
            <person name="Frank S."/>
            <person name="Youle R.J."/>
            <person name="Karbowski M."/>
        </authorList>
    </citation>
    <scope>INTERACTION WITH ZNRF4</scope>
    <scope>UBIQUITINATION</scope>
</reference>
<reference key="29">
    <citation type="journal article" date="2011" name="Sci. Signal.">
        <title>System-wide temporal characterization of the proteome and phosphoproteome of human embryonic stem cell differentiation.</title>
        <authorList>
            <person name="Rigbolt K.T."/>
            <person name="Prokhorova T.A."/>
            <person name="Akimov V."/>
            <person name="Henningsen J."/>
            <person name="Johansen P.T."/>
            <person name="Kratchmarova I."/>
            <person name="Kassem M."/>
            <person name="Mann M."/>
            <person name="Olsen J.V."/>
            <person name="Blagoev B."/>
        </authorList>
    </citation>
    <scope>PHOSPHORYLATION [LARGE SCALE ANALYSIS] AT SER-554; THR-562 AND SER-583</scope>
    <scope>IDENTIFICATION BY MASS SPECTROMETRY [LARGE SCALE ANALYSIS]</scope>
</reference>
<reference key="30">
    <citation type="journal article" date="2012" name="EMBO J.">
        <title>Palmitoylated calnexin is a key component of the ribosome-translocon complex.</title>
        <authorList>
            <person name="Lakkaraju A.K."/>
            <person name="Abrami L."/>
            <person name="Lemmin T."/>
            <person name="Blaskovic S."/>
            <person name="Kunz B."/>
            <person name="Kihara A."/>
            <person name="Dal Peraro M."/>
            <person name="van der Goot F.G."/>
        </authorList>
    </citation>
    <scope>PALMITOYLATION AT CYS-502 AND CYS-503 BY DHHC6</scope>
    <scope>SUBCELLULAR LOCATION</scope>
    <scope>INTERACTION WITH SSR1</scope>
</reference>
<reference key="31">
    <citation type="journal article" date="2013" name="J. Proteome Res.">
        <title>Toward a comprehensive characterization of a human cancer cell phosphoproteome.</title>
        <authorList>
            <person name="Zhou H."/>
            <person name="Di Palma S."/>
            <person name="Preisinger C."/>
            <person name="Peng M."/>
            <person name="Polat A.N."/>
            <person name="Heck A.J."/>
            <person name="Mohammed S."/>
        </authorList>
    </citation>
    <scope>PHOSPHORYLATION [LARGE SCALE ANALYSIS] AT SER-554; THR-562; SER-564 AND SER-583</scope>
    <scope>IDENTIFICATION BY MASS SPECTROMETRY [LARGE SCALE ANALYSIS]</scope>
    <source>
        <tissue>Cervix carcinoma</tissue>
        <tissue>Erythroleukemia</tissue>
    </source>
</reference>
<reference key="32">
    <citation type="journal article" date="2013" name="PLoS ONE">
        <title>SERPINA2 is a novel gene with a divergent function from SERPINA1.</title>
        <authorList>
            <person name="Marques P.I."/>
            <person name="Ferreira Z."/>
            <person name="Martins M."/>
            <person name="Figueiredo J."/>
            <person name="Silva D.I."/>
            <person name="Castro P."/>
            <person name="Morales-Hojas R."/>
            <person name="Simoes-Correia J."/>
            <person name="Seixas S."/>
        </authorList>
    </citation>
    <scope>INTERACTION WITH SERPINA2P AND SERPINA1</scope>
    <scope>SUBCELLULAR LOCATION</scope>
</reference>
<reference key="33">
    <citation type="journal article" date="2014" name="J. Proteomics">
        <title>An enzyme assisted RP-RPLC approach for in-depth analysis of human liver phosphoproteome.</title>
        <authorList>
            <person name="Bian Y."/>
            <person name="Song C."/>
            <person name="Cheng K."/>
            <person name="Dong M."/>
            <person name="Wang F."/>
            <person name="Huang J."/>
            <person name="Sun D."/>
            <person name="Wang L."/>
            <person name="Ye M."/>
            <person name="Zou H."/>
        </authorList>
    </citation>
    <scope>PHOSPHORYLATION [LARGE SCALE ANALYSIS] AT SER-554; THR-562; SER-564 AND SER-583</scope>
    <scope>IDENTIFICATION BY MASS SPECTROMETRY [LARGE SCALE ANALYSIS]</scope>
    <source>
        <tissue>Liver</tissue>
    </source>
</reference>
<reference key="34">
    <citation type="journal article" date="2014" name="Mol. Biol. Cell">
        <title>Mutations in Fis1 disrupt orderly disposal of defective mitochondria.</title>
        <authorList>
            <person name="Shen Q."/>
            <person name="Yamano K."/>
            <person name="Head B.P."/>
            <person name="Kawajiri S."/>
            <person name="Cheung J.T."/>
            <person name="Wang C."/>
            <person name="Cho J.H."/>
            <person name="Hattori N."/>
            <person name="Youle R.J."/>
            <person name="van der Bliek A.M."/>
        </authorList>
    </citation>
    <scope>INTERACTION WITH DNM1L</scope>
</reference>
<reference key="35">
    <citation type="journal article" date="2015" name="Proteomics">
        <title>N-terminome analysis of the human mitochondrial proteome.</title>
        <authorList>
            <person name="Vaca Jacome A.S."/>
            <person name="Rabilloud T."/>
            <person name="Schaeffer-Reiss C."/>
            <person name="Rompais M."/>
            <person name="Ayoub D."/>
            <person name="Lane L."/>
            <person name="Bairoch A."/>
            <person name="Van Dorsselaer A."/>
            <person name="Carapito C."/>
        </authorList>
    </citation>
    <scope>CLEAVAGE OF SIGNAL PEPTIDE [LARGE SCALE ANALYSIS] AFTER ALA-20</scope>
    <scope>IDENTIFICATION BY MASS SPECTROMETRY [LARGE SCALE ANALYSIS]</scope>
</reference>
<reference key="36">
    <citation type="journal article" date="2018" name="Oncogene">
        <title>The cancer-associated microprotein CASIMO1 controls cell proliferation and interacts with squalene epoxidase modulating lipid droplet formation.</title>
        <authorList>
            <person name="Polycarpou-Schwarz M."/>
            <person name="Gross M."/>
            <person name="Mestdagh P."/>
            <person name="Schott J."/>
            <person name="Grund S.E."/>
            <person name="Hildenbrand C."/>
            <person name="Rom J."/>
            <person name="Aulmann S."/>
            <person name="Sinn H.P."/>
            <person name="Vandesompele J."/>
            <person name="Diederichs S."/>
        </authorList>
    </citation>
    <scope>INTERACTION WITH SMIM22</scope>
</reference>
<reference key="37">
    <citation type="journal article" date="2019" name="Am. J. Hum. Genet.">
        <title>TMX2 is a crucial regulator of cellular redox state, and its dysfunction causes severe brain developmental abnormalities.</title>
        <authorList>
            <person name="Vandervore L.V."/>
            <person name="Schot R."/>
            <person name="Milanese C."/>
            <person name="Smits D.J."/>
            <person name="Kasteleijn E."/>
            <person name="Fry A.E."/>
            <person name="Pilz D.T."/>
            <person name="Brock S."/>
            <person name="Boerklue-Yuecel E."/>
            <person name="Post M."/>
            <person name="Bahi-Buisson N."/>
            <person name="Sanchez-Soler M.J."/>
            <person name="van Slegtenhorst M."/>
            <person name="Keren B."/>
            <person name="Afenjar A."/>
            <person name="Coury S.A."/>
            <person name="Tan W.H."/>
            <person name="Oegema R."/>
            <person name="de Vries L.S."/>
            <person name="Fawcett K.A."/>
            <person name="Nikkels P.G.J."/>
            <person name="Bertoli-Avella A."/>
            <person name="Al Hashem A."/>
            <person name="Alwabel A.A."/>
            <person name="Tlili-Graiess K."/>
            <person name="Efthymiou S."/>
            <person name="Zafar F."/>
            <person name="Rana N."/>
            <person name="Bibi F."/>
            <person name="Houlden H."/>
            <person name="Maroofian R."/>
            <person name="Person R.E."/>
            <person name="Crunk A."/>
            <person name="Savatt J.M."/>
            <person name="Turner L."/>
            <person name="Doosti M."/>
            <person name="Karimiani E.G."/>
            <person name="Saadi N.W."/>
            <person name="Akhondian J."/>
            <person name="Lequin M.H."/>
            <person name="Kayserili H."/>
            <person name="van der Spek P.J."/>
            <person name="Jansen A.C."/>
            <person name="Kros J.M."/>
            <person name="Verdijk R.M."/>
            <person name="Milosevic N.J."/>
            <person name="Fornerod M."/>
            <person name="Mastroberardino P.G."/>
            <person name="Mancini G.M.S."/>
        </authorList>
    </citation>
    <scope>INTERACTION WITH TMX2</scope>
</reference>
<reference key="38">
    <citation type="journal article" date="2020" name="Cell Rep.">
        <title>NACHO Engages N-Glycosylation ER Chaperone Pathways for alpha7 Nicotinic Receptor Assembly.</title>
        <authorList>
            <person name="Kweon H.J."/>
            <person name="Gu S."/>
            <person name="Witham E."/>
            <person name="Dhara M."/>
            <person name="Yu H."/>
            <person name="Mandon E.D."/>
            <person name="Jawhari A."/>
            <person name="Bredt D.S."/>
        </authorList>
    </citation>
    <scope>INTERACTION WITH CHRNA7</scope>
</reference>
<reference key="39">
    <citation type="journal article" date="2021" name="EMBO Rep.">
        <title>Role of FAM134 paralogues in endoplasmic reticulum remodeling, ER-phagy, and Collagen quality control.</title>
        <authorList>
            <person name="Reggio A."/>
            <person name="Buonomo V."/>
            <person name="Berkane R."/>
            <person name="Bhaskara R.M."/>
            <person name="Tellechea M."/>
            <person name="Peluso I."/>
            <person name="Polishchuk E."/>
            <person name="Di Lorenzo G."/>
            <person name="Cirillo C."/>
            <person name="Esposito M."/>
            <person name="Hussain A."/>
            <person name="Huebner A.K."/>
            <person name="Huebner C.A."/>
            <person name="Settembre C."/>
            <person name="Hummer G."/>
            <person name="Grumati P."/>
            <person name="Stolz A."/>
        </authorList>
    </citation>
    <scope>INTERACTION WITH RETREG2 AND RETREG3</scope>
</reference>
<proteinExistence type="evidence at protein level"/>
<protein>
    <recommendedName>
        <fullName>Calnexin</fullName>
    </recommendedName>
    <alternativeName>
        <fullName>IP90</fullName>
    </alternativeName>
    <alternativeName>
        <fullName>Major histocompatibility complex class I antigen-binding protein p88</fullName>
    </alternativeName>
    <alternativeName>
        <fullName>p90</fullName>
    </alternativeName>
</protein>
<sequence>MEGKWLLCMLLVLGTAIVEAHDGHDDDVIDIEDDLDDVIEEVEDSKPDTTAPPSSPKVTYKAPVPTGEVYFADSFDRGTLSGWILSKAKKDDTDDEIAKYDGKWEVEEMKESKLPGDKGLVLMSRAKHHAISAKLNKPFLFDTKPLIVQYEVNFQNGIECGGAYVKLLSKTPELNLDQFHDKTPYTIMFGPDKCGEDYKLHFIFRHKNPKTGIYEEKHAKRPDADLKTYFTDKKTHLYTLILNPDNSFEILVDQSVVNSGNLLNDMTPPVNPSREIEDPEDRKPEDWDERPKIPDPEAVKPDDWDEDAPAKIPDEEATKPEGWLDDEPEYVPDPDAEKPEDWDEDMDGEWEAPQIANPRCESAPGCGVWQRPVIDNPNYKGKWKPPMIDNPSYQGIWKPRKIPNPDFFEDLEPFRMTPFSAIGLELWSMTSDIFFDNFIICADRRIVDDWANDGWGLKKAADGAAEPGVVGQMIEAAEERPWLWVVYILTVALPVFLVILFCCSGKKQTSGMEYKKTDAPQPDVKEEEEEKEEEKDKGDEEEEGEEKLEEKQKSDAEEDGGTVSQEEEDRKPKAEEDEILNRSPRNRKPRRE</sequence>
<keyword id="KW-0007">Acetylation</keyword>
<keyword id="KW-0025">Alternative splicing</keyword>
<keyword id="KW-0106">Calcium</keyword>
<keyword id="KW-0143">Chaperone</keyword>
<keyword id="KW-0903">Direct protein sequencing</keyword>
<keyword id="KW-1015">Disulfide bond</keyword>
<keyword id="KW-0256">Endoplasmic reticulum</keyword>
<keyword id="KW-0945">Host-virus interaction</keyword>
<keyword id="KW-0430">Lectin</keyword>
<keyword id="KW-0449">Lipoprotein</keyword>
<keyword id="KW-0472">Membrane</keyword>
<keyword id="KW-0479">Metal-binding</keyword>
<keyword id="KW-0496">Mitochondrion</keyword>
<keyword id="KW-0564">Palmitate</keyword>
<keyword id="KW-0597">Phosphoprotein</keyword>
<keyword id="KW-1267">Proteomics identification</keyword>
<keyword id="KW-1185">Reference proteome</keyword>
<keyword id="KW-0677">Repeat</keyword>
<keyword id="KW-0732">Signal</keyword>
<keyword id="KW-0812">Transmembrane</keyword>
<keyword id="KW-1133">Transmembrane helix</keyword>
<keyword id="KW-0832">Ubl conjugation</keyword>